<protein>
    <recommendedName>
        <fullName>Protein FMP52, mitochondrial</fullName>
    </recommendedName>
</protein>
<feature type="transit peptide" description="Mitochondrion">
    <location>
        <begin position="1"/>
        <end status="unknown"/>
    </location>
</feature>
<feature type="chain" id="PRO_0000301821" description="Protein FMP52, mitochondrial">
    <location>
        <begin status="unknown"/>
        <end position="226"/>
    </location>
</feature>
<accession>Q6BLA6</accession>
<organism>
    <name type="scientific">Debaryomyces hansenii (strain ATCC 36239 / CBS 767 / BCRC 21394 / JCM 1990 / NBRC 0083 / IGC 2968)</name>
    <name type="common">Yeast</name>
    <name type="synonym">Torulaspora hansenii</name>
    <dbReference type="NCBI Taxonomy" id="284592"/>
    <lineage>
        <taxon>Eukaryota</taxon>
        <taxon>Fungi</taxon>
        <taxon>Dikarya</taxon>
        <taxon>Ascomycota</taxon>
        <taxon>Saccharomycotina</taxon>
        <taxon>Pichiomycetes</taxon>
        <taxon>Debaryomycetaceae</taxon>
        <taxon>Debaryomyces</taxon>
    </lineage>
</organism>
<keyword id="KW-0472">Membrane</keyword>
<keyword id="KW-0496">Mitochondrion</keyword>
<keyword id="KW-1000">Mitochondrion outer membrane</keyword>
<keyword id="KW-1185">Reference proteome</keyword>
<keyword id="KW-0809">Transit peptide</keyword>
<gene>
    <name type="primary">FMP52</name>
    <name type="ordered locus">DEHA2F15070g</name>
</gene>
<evidence type="ECO:0000250" key="1"/>
<evidence type="ECO:0000305" key="2"/>
<reference key="1">
    <citation type="journal article" date="2004" name="Nature">
        <title>Genome evolution in yeasts.</title>
        <authorList>
            <person name="Dujon B."/>
            <person name="Sherman D."/>
            <person name="Fischer G."/>
            <person name="Durrens P."/>
            <person name="Casaregola S."/>
            <person name="Lafontaine I."/>
            <person name="de Montigny J."/>
            <person name="Marck C."/>
            <person name="Neuveglise C."/>
            <person name="Talla E."/>
            <person name="Goffard N."/>
            <person name="Frangeul L."/>
            <person name="Aigle M."/>
            <person name="Anthouard V."/>
            <person name="Babour A."/>
            <person name="Barbe V."/>
            <person name="Barnay S."/>
            <person name="Blanchin S."/>
            <person name="Beckerich J.-M."/>
            <person name="Beyne E."/>
            <person name="Bleykasten C."/>
            <person name="Boisrame A."/>
            <person name="Boyer J."/>
            <person name="Cattolico L."/>
            <person name="Confanioleri F."/>
            <person name="de Daruvar A."/>
            <person name="Despons L."/>
            <person name="Fabre E."/>
            <person name="Fairhead C."/>
            <person name="Ferry-Dumazet H."/>
            <person name="Groppi A."/>
            <person name="Hantraye F."/>
            <person name="Hennequin C."/>
            <person name="Jauniaux N."/>
            <person name="Joyet P."/>
            <person name="Kachouri R."/>
            <person name="Kerrest A."/>
            <person name="Koszul R."/>
            <person name="Lemaire M."/>
            <person name="Lesur I."/>
            <person name="Ma L."/>
            <person name="Muller H."/>
            <person name="Nicaud J.-M."/>
            <person name="Nikolski M."/>
            <person name="Oztas S."/>
            <person name="Ozier-Kalogeropoulos O."/>
            <person name="Pellenz S."/>
            <person name="Potier S."/>
            <person name="Richard G.-F."/>
            <person name="Straub M.-L."/>
            <person name="Suleau A."/>
            <person name="Swennen D."/>
            <person name="Tekaia F."/>
            <person name="Wesolowski-Louvel M."/>
            <person name="Westhof E."/>
            <person name="Wirth B."/>
            <person name="Zeniou-Meyer M."/>
            <person name="Zivanovic Y."/>
            <person name="Bolotin-Fukuhara M."/>
            <person name="Thierry A."/>
            <person name="Bouchier C."/>
            <person name="Caudron B."/>
            <person name="Scarpelli C."/>
            <person name="Gaillardin C."/>
            <person name="Weissenbach J."/>
            <person name="Wincker P."/>
            <person name="Souciet J.-L."/>
        </authorList>
    </citation>
    <scope>NUCLEOTIDE SEQUENCE [LARGE SCALE GENOMIC DNA]</scope>
    <source>
        <strain>ATCC 36239 / CBS 767 / BCRC 21394 / JCM 1990 / NBRC 0083 / IGC 2968</strain>
    </source>
</reference>
<sequence>MSAFIIGSTGLVGAQLLKVAAESNKFETVHTVSRRPVDGRDKVQGVVETDTAKWPEVIRENSKGVRTFFSAFGTTRADAGGVENFKKIDYGINYECAKAAKEAGIETFVLVSSLGANESSMLFYLKSKGKLENDIIALEFPRTIIIRPGALLGKRQKSQGIANEIFQKWGNMVKGTPFKFTAYPITGEEVAKVAVHLASEPLTQGDGPVVKAVGTSELDHLVKSLE</sequence>
<comment type="subcellular location">
    <subcellularLocation>
        <location evidence="1">Mitochondrion outer membrane</location>
        <topology evidence="1">Peripheral membrane protein</topology>
    </subcellularLocation>
</comment>
<comment type="similarity">
    <text evidence="2">Belongs to the FMP52 family.</text>
</comment>
<proteinExistence type="inferred from homology"/>
<name>FMP52_DEBHA</name>
<dbReference type="EMBL" id="CR382138">
    <property type="protein sequence ID" value="CAG89385.1"/>
    <property type="molecule type" value="Genomic_DNA"/>
</dbReference>
<dbReference type="RefSeq" id="XP_461015.1">
    <property type="nucleotide sequence ID" value="XM_461015.1"/>
</dbReference>
<dbReference type="SMR" id="Q6BLA6"/>
<dbReference type="FunCoup" id="Q6BLA6">
    <property type="interactions" value="110"/>
</dbReference>
<dbReference type="STRING" id="284592.Q6BLA6"/>
<dbReference type="GeneID" id="2903715"/>
<dbReference type="KEGG" id="dha:DEHA2F15070g"/>
<dbReference type="VEuPathDB" id="FungiDB:DEHA2F15070g"/>
<dbReference type="eggNOG" id="KOG4039">
    <property type="taxonomic scope" value="Eukaryota"/>
</dbReference>
<dbReference type="HOGENOM" id="CLU_071330_2_2_1"/>
<dbReference type="InParanoid" id="Q6BLA6"/>
<dbReference type="OMA" id="CIENAKA"/>
<dbReference type="OrthoDB" id="430436at2759"/>
<dbReference type="Proteomes" id="UP000000599">
    <property type="component" value="Chromosome F"/>
</dbReference>
<dbReference type="GO" id="GO:0005741">
    <property type="term" value="C:mitochondrial outer membrane"/>
    <property type="evidence" value="ECO:0007669"/>
    <property type="project" value="UniProtKB-SubCell"/>
</dbReference>
<dbReference type="GO" id="GO:0051170">
    <property type="term" value="P:import into nucleus"/>
    <property type="evidence" value="ECO:0007669"/>
    <property type="project" value="TreeGrafter"/>
</dbReference>
<dbReference type="FunFam" id="3.40.50.720:FF:000366">
    <property type="entry name" value="Protein FMP52, mitochondrial"/>
    <property type="match status" value="1"/>
</dbReference>
<dbReference type="Gene3D" id="3.40.50.720">
    <property type="entry name" value="NAD(P)-binding Rossmann-like Domain"/>
    <property type="match status" value="1"/>
</dbReference>
<dbReference type="InterPro" id="IPR016040">
    <property type="entry name" value="NAD(P)-bd_dom"/>
</dbReference>
<dbReference type="InterPro" id="IPR036291">
    <property type="entry name" value="NAD(P)-bd_dom_sf"/>
</dbReference>
<dbReference type="PANTHER" id="PTHR14097">
    <property type="entry name" value="OXIDOREDUCTASE HTATIP2"/>
    <property type="match status" value="1"/>
</dbReference>
<dbReference type="PANTHER" id="PTHR14097:SF7">
    <property type="entry name" value="OXIDOREDUCTASE HTATIP2"/>
    <property type="match status" value="1"/>
</dbReference>
<dbReference type="Pfam" id="PF13460">
    <property type="entry name" value="NAD_binding_10"/>
    <property type="match status" value="1"/>
</dbReference>
<dbReference type="SUPFAM" id="SSF51735">
    <property type="entry name" value="NAD(P)-binding Rossmann-fold domains"/>
    <property type="match status" value="1"/>
</dbReference>